<proteinExistence type="inferred from homology"/>
<sequence length="110" mass="13296">MLEKTTRMNYLFDFYQSLLTQKQRSYMSLYYLDDLSLGEIAEEFDVSRQAVYDNIKRTEAMLEEYEDKLVLLQKFQERQRLVAKLKQLISEEEHVNEEMKQVVEAIEKLD</sequence>
<comment type="function">
    <text evidence="1">Might take part in the signal recognition particle (SRP) pathway. This is inferred from the conservation of its genetic proximity to ftsY/ffh. May be a regulatory protein.</text>
</comment>
<comment type="similarity">
    <text evidence="1">Belongs to the UPF0122 family.</text>
</comment>
<reference key="1">
    <citation type="journal article" date="2007" name="J. Bacteriol.">
        <title>The complete genome sequence of Bacillus thuringiensis Al Hakam.</title>
        <authorList>
            <person name="Challacombe J.F."/>
            <person name="Altherr M.R."/>
            <person name="Xie G."/>
            <person name="Bhotika S.S."/>
            <person name="Brown N."/>
            <person name="Bruce D."/>
            <person name="Campbell C.S."/>
            <person name="Campbell M.L."/>
            <person name="Chen J."/>
            <person name="Chertkov O."/>
            <person name="Cleland C."/>
            <person name="Dimitrijevic M."/>
            <person name="Doggett N.A."/>
            <person name="Fawcett J.J."/>
            <person name="Glavina T."/>
            <person name="Goodwin L.A."/>
            <person name="Green L.D."/>
            <person name="Han C.S."/>
            <person name="Hill K.K."/>
            <person name="Hitchcock P."/>
            <person name="Jackson P.J."/>
            <person name="Keim P."/>
            <person name="Kewalramani A.R."/>
            <person name="Longmire J."/>
            <person name="Lucas S."/>
            <person name="Malfatti S."/>
            <person name="Martinez D."/>
            <person name="McMurry K."/>
            <person name="Meincke L.J."/>
            <person name="Misra M."/>
            <person name="Moseman B.L."/>
            <person name="Mundt M."/>
            <person name="Munk A.C."/>
            <person name="Okinaka R.T."/>
            <person name="Parson-Quintana B."/>
            <person name="Reilly L.P."/>
            <person name="Richardson P."/>
            <person name="Robinson D.L."/>
            <person name="Saunders E."/>
            <person name="Tapia R."/>
            <person name="Tesmer J.G."/>
            <person name="Thayer N."/>
            <person name="Thompson L.S."/>
            <person name="Tice H."/>
            <person name="Ticknor L.O."/>
            <person name="Wills P.L."/>
            <person name="Gilna P."/>
            <person name="Brettin T.S."/>
        </authorList>
    </citation>
    <scope>NUCLEOTIDE SEQUENCE [LARGE SCALE GENOMIC DNA]</scope>
    <source>
        <strain>Al Hakam</strain>
    </source>
</reference>
<name>Y3477_BACAH</name>
<feature type="chain" id="PRO_1000012515" description="UPF0122 protein BALH_3477">
    <location>
        <begin position="1"/>
        <end position="110"/>
    </location>
</feature>
<gene>
    <name type="ordered locus">BALH_3477</name>
</gene>
<dbReference type="EMBL" id="CP000485">
    <property type="protein sequence ID" value="ABK86712.1"/>
    <property type="molecule type" value="Genomic_DNA"/>
</dbReference>
<dbReference type="RefSeq" id="WP_000891061.1">
    <property type="nucleotide sequence ID" value="NC_008600.1"/>
</dbReference>
<dbReference type="SMR" id="A0RHL9"/>
<dbReference type="KEGG" id="btl:BALH_3477"/>
<dbReference type="HOGENOM" id="CLU_129218_1_0_9"/>
<dbReference type="Gene3D" id="1.10.10.10">
    <property type="entry name" value="Winged helix-like DNA-binding domain superfamily/Winged helix DNA-binding domain"/>
    <property type="match status" value="1"/>
</dbReference>
<dbReference type="HAMAP" id="MF_00245">
    <property type="entry name" value="UPF0122"/>
    <property type="match status" value="1"/>
</dbReference>
<dbReference type="InterPro" id="IPR013324">
    <property type="entry name" value="RNA_pol_sigma_r3/r4-like"/>
</dbReference>
<dbReference type="InterPro" id="IPR007394">
    <property type="entry name" value="UPF0122"/>
</dbReference>
<dbReference type="InterPro" id="IPR054831">
    <property type="entry name" value="UPF0122_fam_protein"/>
</dbReference>
<dbReference type="InterPro" id="IPR036388">
    <property type="entry name" value="WH-like_DNA-bd_sf"/>
</dbReference>
<dbReference type="NCBIfam" id="NF001068">
    <property type="entry name" value="PRK00118.1-4"/>
    <property type="match status" value="1"/>
</dbReference>
<dbReference type="NCBIfam" id="NF001070">
    <property type="entry name" value="PRK00118.1-6"/>
    <property type="match status" value="1"/>
</dbReference>
<dbReference type="NCBIfam" id="NF045758">
    <property type="entry name" value="YlxM"/>
    <property type="match status" value="1"/>
</dbReference>
<dbReference type="PANTHER" id="PTHR40083">
    <property type="entry name" value="UPF0122 PROTEIN CBO2450/CLC_2298"/>
    <property type="match status" value="1"/>
</dbReference>
<dbReference type="PANTHER" id="PTHR40083:SF1">
    <property type="entry name" value="UPF0122 PROTEIN YLXM"/>
    <property type="match status" value="1"/>
</dbReference>
<dbReference type="Pfam" id="PF04297">
    <property type="entry name" value="UPF0122"/>
    <property type="match status" value="1"/>
</dbReference>
<dbReference type="SUPFAM" id="SSF88659">
    <property type="entry name" value="Sigma3 and sigma4 domains of RNA polymerase sigma factors"/>
    <property type="match status" value="1"/>
</dbReference>
<protein>
    <recommendedName>
        <fullName evidence="1">UPF0122 protein BALH_3477</fullName>
    </recommendedName>
</protein>
<accession>A0RHL9</accession>
<evidence type="ECO:0000255" key="1">
    <source>
        <dbReference type="HAMAP-Rule" id="MF_00245"/>
    </source>
</evidence>
<organism>
    <name type="scientific">Bacillus thuringiensis (strain Al Hakam)</name>
    <dbReference type="NCBI Taxonomy" id="412694"/>
    <lineage>
        <taxon>Bacteria</taxon>
        <taxon>Bacillati</taxon>
        <taxon>Bacillota</taxon>
        <taxon>Bacilli</taxon>
        <taxon>Bacillales</taxon>
        <taxon>Bacillaceae</taxon>
        <taxon>Bacillus</taxon>
        <taxon>Bacillus cereus group</taxon>
    </lineage>
</organism>